<proteinExistence type="inferred from homology"/>
<accession>A6V1D4</accession>
<name>PYRH_PSEP7</name>
<reference key="1">
    <citation type="submission" date="2007-06" db="EMBL/GenBank/DDBJ databases">
        <authorList>
            <person name="Dodson R.J."/>
            <person name="Harkins D."/>
            <person name="Paulsen I.T."/>
        </authorList>
    </citation>
    <scope>NUCLEOTIDE SEQUENCE [LARGE SCALE GENOMIC DNA]</scope>
    <source>
        <strain>DSM 24068 / PA7</strain>
    </source>
</reference>
<sequence length="245" mass="26316">MAQQVSARQPRYKRILLKLSGEALMGSEEFGIDPKVLDRMALEIGQLVGIGVQVGLVIGGGNLFRGAALSAAGMDRVTGDHMGMLATVMNGLAMRDALERSNIPALVMSAISMVGVTDHYDRRKAMRHLNGGEVVIFSAGTGNPFFTTDSAACLRAIEIDADVVLKATKVDGVYTADPFKDPNAEKFERLTYDEVLDRKLGVMDLTAICLCRDQNMPLRVFNMNKPGALLNIVVGGAEGTLIEEG</sequence>
<gene>
    <name evidence="1" type="primary">pyrH</name>
    <name type="ordered locus">PSPA7_1485</name>
</gene>
<dbReference type="EC" id="2.7.4.22" evidence="1"/>
<dbReference type="EMBL" id="CP000744">
    <property type="protein sequence ID" value="ABR81636.1"/>
    <property type="molecule type" value="Genomic_DNA"/>
</dbReference>
<dbReference type="RefSeq" id="WP_012074693.1">
    <property type="nucleotide sequence ID" value="NC_009656.1"/>
</dbReference>
<dbReference type="SMR" id="A6V1D4"/>
<dbReference type="GeneID" id="77219865"/>
<dbReference type="KEGG" id="pap:PSPA7_1485"/>
<dbReference type="HOGENOM" id="CLU_033861_0_0_6"/>
<dbReference type="UniPathway" id="UPA00159">
    <property type="reaction ID" value="UER00275"/>
</dbReference>
<dbReference type="Proteomes" id="UP000001582">
    <property type="component" value="Chromosome"/>
</dbReference>
<dbReference type="GO" id="GO:0005829">
    <property type="term" value="C:cytosol"/>
    <property type="evidence" value="ECO:0007669"/>
    <property type="project" value="TreeGrafter"/>
</dbReference>
<dbReference type="GO" id="GO:0005524">
    <property type="term" value="F:ATP binding"/>
    <property type="evidence" value="ECO:0007669"/>
    <property type="project" value="UniProtKB-KW"/>
</dbReference>
<dbReference type="GO" id="GO:0033862">
    <property type="term" value="F:UMP kinase activity"/>
    <property type="evidence" value="ECO:0007669"/>
    <property type="project" value="UniProtKB-EC"/>
</dbReference>
<dbReference type="GO" id="GO:0044210">
    <property type="term" value="P:'de novo' CTP biosynthetic process"/>
    <property type="evidence" value="ECO:0007669"/>
    <property type="project" value="UniProtKB-UniRule"/>
</dbReference>
<dbReference type="GO" id="GO:0006225">
    <property type="term" value="P:UDP biosynthetic process"/>
    <property type="evidence" value="ECO:0007669"/>
    <property type="project" value="TreeGrafter"/>
</dbReference>
<dbReference type="CDD" id="cd04254">
    <property type="entry name" value="AAK_UMPK-PyrH-Ec"/>
    <property type="match status" value="1"/>
</dbReference>
<dbReference type="FunFam" id="3.40.1160.10:FF:000001">
    <property type="entry name" value="Uridylate kinase"/>
    <property type="match status" value="1"/>
</dbReference>
<dbReference type="Gene3D" id="3.40.1160.10">
    <property type="entry name" value="Acetylglutamate kinase-like"/>
    <property type="match status" value="1"/>
</dbReference>
<dbReference type="HAMAP" id="MF_01220_B">
    <property type="entry name" value="PyrH_B"/>
    <property type="match status" value="1"/>
</dbReference>
<dbReference type="InterPro" id="IPR036393">
    <property type="entry name" value="AceGlu_kinase-like_sf"/>
</dbReference>
<dbReference type="InterPro" id="IPR001048">
    <property type="entry name" value="Asp/Glu/Uridylate_kinase"/>
</dbReference>
<dbReference type="InterPro" id="IPR011817">
    <property type="entry name" value="Uridylate_kinase"/>
</dbReference>
<dbReference type="InterPro" id="IPR015963">
    <property type="entry name" value="Uridylate_kinase_bac"/>
</dbReference>
<dbReference type="NCBIfam" id="TIGR02075">
    <property type="entry name" value="pyrH_bact"/>
    <property type="match status" value="1"/>
</dbReference>
<dbReference type="PANTHER" id="PTHR42833">
    <property type="entry name" value="URIDYLATE KINASE"/>
    <property type="match status" value="1"/>
</dbReference>
<dbReference type="PANTHER" id="PTHR42833:SF4">
    <property type="entry name" value="URIDYLATE KINASE PUMPKIN, CHLOROPLASTIC"/>
    <property type="match status" value="1"/>
</dbReference>
<dbReference type="Pfam" id="PF00696">
    <property type="entry name" value="AA_kinase"/>
    <property type="match status" value="1"/>
</dbReference>
<dbReference type="PIRSF" id="PIRSF005650">
    <property type="entry name" value="Uridylate_kin"/>
    <property type="match status" value="1"/>
</dbReference>
<dbReference type="SUPFAM" id="SSF53633">
    <property type="entry name" value="Carbamate kinase-like"/>
    <property type="match status" value="1"/>
</dbReference>
<protein>
    <recommendedName>
        <fullName evidence="1">Uridylate kinase</fullName>
        <shortName evidence="1">UK</shortName>
        <ecNumber evidence="1">2.7.4.22</ecNumber>
    </recommendedName>
    <alternativeName>
        <fullName evidence="1">Uridine monophosphate kinase</fullName>
        <shortName evidence="1">UMP kinase</shortName>
        <shortName evidence="1">UMPK</shortName>
    </alternativeName>
</protein>
<keyword id="KW-0067">ATP-binding</keyword>
<keyword id="KW-0963">Cytoplasm</keyword>
<keyword id="KW-0418">Kinase</keyword>
<keyword id="KW-0547">Nucleotide-binding</keyword>
<keyword id="KW-0665">Pyrimidine biosynthesis</keyword>
<keyword id="KW-0808">Transferase</keyword>
<evidence type="ECO:0000255" key="1">
    <source>
        <dbReference type="HAMAP-Rule" id="MF_01220"/>
    </source>
</evidence>
<feature type="chain" id="PRO_1000053980" description="Uridylate kinase">
    <location>
        <begin position="1"/>
        <end position="245"/>
    </location>
</feature>
<feature type="binding site" evidence="1">
    <location>
        <begin position="18"/>
        <end position="21"/>
    </location>
    <ligand>
        <name>ATP</name>
        <dbReference type="ChEBI" id="CHEBI:30616"/>
    </ligand>
</feature>
<feature type="binding site" evidence="1">
    <location>
        <position position="60"/>
    </location>
    <ligand>
        <name>UMP</name>
        <dbReference type="ChEBI" id="CHEBI:57865"/>
    </ligand>
</feature>
<feature type="binding site" evidence="1">
    <location>
        <position position="61"/>
    </location>
    <ligand>
        <name>ATP</name>
        <dbReference type="ChEBI" id="CHEBI:30616"/>
    </ligand>
</feature>
<feature type="binding site" evidence="1">
    <location>
        <position position="65"/>
    </location>
    <ligand>
        <name>ATP</name>
        <dbReference type="ChEBI" id="CHEBI:30616"/>
    </ligand>
</feature>
<feature type="binding site" evidence="1">
    <location>
        <position position="80"/>
    </location>
    <ligand>
        <name>UMP</name>
        <dbReference type="ChEBI" id="CHEBI:57865"/>
    </ligand>
</feature>
<feature type="binding site" evidence="1">
    <location>
        <begin position="141"/>
        <end position="148"/>
    </location>
    <ligand>
        <name>UMP</name>
        <dbReference type="ChEBI" id="CHEBI:57865"/>
    </ligand>
</feature>
<feature type="binding site" evidence="1">
    <location>
        <position position="168"/>
    </location>
    <ligand>
        <name>ATP</name>
        <dbReference type="ChEBI" id="CHEBI:30616"/>
    </ligand>
</feature>
<feature type="binding site" evidence="1">
    <location>
        <position position="174"/>
    </location>
    <ligand>
        <name>ATP</name>
        <dbReference type="ChEBI" id="CHEBI:30616"/>
    </ligand>
</feature>
<feature type="binding site" evidence="1">
    <location>
        <position position="177"/>
    </location>
    <ligand>
        <name>ATP</name>
        <dbReference type="ChEBI" id="CHEBI:30616"/>
    </ligand>
</feature>
<comment type="function">
    <text evidence="1">Catalyzes the reversible phosphorylation of UMP to UDP.</text>
</comment>
<comment type="catalytic activity">
    <reaction evidence="1">
        <text>UMP + ATP = UDP + ADP</text>
        <dbReference type="Rhea" id="RHEA:24400"/>
        <dbReference type="ChEBI" id="CHEBI:30616"/>
        <dbReference type="ChEBI" id="CHEBI:57865"/>
        <dbReference type="ChEBI" id="CHEBI:58223"/>
        <dbReference type="ChEBI" id="CHEBI:456216"/>
        <dbReference type="EC" id="2.7.4.22"/>
    </reaction>
</comment>
<comment type="activity regulation">
    <text evidence="1">Inhibited by UTP.</text>
</comment>
<comment type="pathway">
    <text evidence="1">Pyrimidine metabolism; CTP biosynthesis via de novo pathway; UDP from UMP (UMPK route): step 1/1.</text>
</comment>
<comment type="subunit">
    <text evidence="1">Homohexamer.</text>
</comment>
<comment type="subcellular location">
    <subcellularLocation>
        <location evidence="1">Cytoplasm</location>
    </subcellularLocation>
</comment>
<comment type="similarity">
    <text evidence="1">Belongs to the UMP kinase family.</text>
</comment>
<organism>
    <name type="scientific">Pseudomonas paraeruginosa (strain DSM 24068 / PA7)</name>
    <name type="common">Pseudomonas aeruginosa (strain PA7)</name>
    <dbReference type="NCBI Taxonomy" id="381754"/>
    <lineage>
        <taxon>Bacteria</taxon>
        <taxon>Pseudomonadati</taxon>
        <taxon>Pseudomonadota</taxon>
        <taxon>Gammaproteobacteria</taxon>
        <taxon>Pseudomonadales</taxon>
        <taxon>Pseudomonadaceae</taxon>
        <taxon>Pseudomonas</taxon>
        <taxon>Pseudomonas paraeruginosa</taxon>
    </lineage>
</organism>